<comment type="function">
    <text evidence="1">Antimicrobial peptide with activity against Gram-negative and Gram-positive bacteria (MIC=13 uM against E.coli, MIC=3 uM against S.aureus) and fungi (MIC=3 uM against C.albicans) (PubMed:15556063). Shows hemolytic activity on human erythrocytes (HC(50)=8 uM) (PubMed:15556063).</text>
</comment>
<comment type="subcellular location">
    <subcellularLocation>
        <location evidence="1">Secreted</location>
    </subcellularLocation>
</comment>
<comment type="tissue specificity">
    <text evidence="4">Expressed by the skin glands.</text>
</comment>
<comment type="developmental stage">
    <text evidence="4">Is equally expressed in juvenile and adult (male and female) frogs.</text>
</comment>
<comment type="mass spectrometry" mass="2581.1" method="MALDI" evidence="1"/>
<comment type="similarity">
    <text evidence="3">Belongs to the frog skin active peptide (FSAP) family. Brevinin subfamily.</text>
</comment>
<comment type="online information" name="The antimicrobial peptide database">
    <link uri="https://wangapd3.com/database/query_output.php?ID=01440"/>
</comment>
<protein>
    <recommendedName>
        <fullName evidence="2">Brevinin-1SPd</fullName>
    </recommendedName>
</protein>
<feature type="peptide" id="PRO_0000449479" description="Brevinin-1SPd" evidence="1">
    <location>
        <begin position="1"/>
        <end position="20"/>
    </location>
</feature>
<feature type="disulfide bond" evidence="1">
    <location>
        <begin position="14"/>
        <end position="20"/>
    </location>
</feature>
<keyword id="KW-0878">Amphibian defense peptide</keyword>
<keyword id="KW-0044">Antibiotic</keyword>
<keyword id="KW-0929">Antimicrobial</keyword>
<keyword id="KW-0204">Cytolysis</keyword>
<keyword id="KW-0903">Direct protein sequencing</keyword>
<keyword id="KW-1015">Disulfide bond</keyword>
<keyword id="KW-0295">Fungicide</keyword>
<keyword id="KW-0354">Hemolysis</keyword>
<keyword id="KW-0964">Secreted</keyword>
<sequence length="20" mass="2126">FFPIIAGMAAKVICAITKKC</sequence>
<dbReference type="GO" id="GO:0005576">
    <property type="term" value="C:extracellular region"/>
    <property type="evidence" value="ECO:0007669"/>
    <property type="project" value="UniProtKB-SubCell"/>
</dbReference>
<dbReference type="GO" id="GO:0042742">
    <property type="term" value="P:defense response to bacterium"/>
    <property type="evidence" value="ECO:0007669"/>
    <property type="project" value="UniProtKB-KW"/>
</dbReference>
<dbReference type="GO" id="GO:0050832">
    <property type="term" value="P:defense response to fungus"/>
    <property type="evidence" value="ECO:0007669"/>
    <property type="project" value="UniProtKB-KW"/>
</dbReference>
<dbReference type="GO" id="GO:0031640">
    <property type="term" value="P:killing of cells of another organism"/>
    <property type="evidence" value="ECO:0007669"/>
    <property type="project" value="UniProtKB-KW"/>
</dbReference>
<dbReference type="InterPro" id="IPR012520">
    <property type="entry name" value="Antimicrobial_frog_1"/>
</dbReference>
<dbReference type="Pfam" id="PF08018">
    <property type="entry name" value="Antimicrobial_1"/>
    <property type="match status" value="1"/>
</dbReference>
<proteinExistence type="evidence at protein level"/>
<reference key="1">
    <citation type="journal article" date="2004" name="Comp. Biochem. Physiol.">
        <title>Purification and characterization of antimicrobial peptides from the skin secretions of the mink frog (Rana septentrionalis).</title>
        <authorList>
            <person name="Bevier C.R."/>
            <person name="Sonnevend A."/>
            <person name="Kolodziejek J."/>
            <person name="Nowotny N."/>
            <person name="Nielsen P.F."/>
            <person name="Conlon J.M."/>
        </authorList>
    </citation>
    <scope>PROTEIN SEQUENCE</scope>
    <scope>SUBCELLULAR LOCATION</scope>
    <scope>MASS SPECTROMETRY</scope>
    <scope>DEVELOPMENTAL STAGE</scope>
    <scope>DISULFIDE BOND</scope>
    <source>
        <tissue>Skin secretion</tissue>
    </source>
</reference>
<name>BR1D_LITST</name>
<organism>
    <name type="scientific">Lithobates septentrionalis</name>
    <name type="common">Mink frog</name>
    <name type="synonym">Rana septentrionalis</name>
    <dbReference type="NCBI Taxonomy" id="190274"/>
    <lineage>
        <taxon>Eukaryota</taxon>
        <taxon>Metazoa</taxon>
        <taxon>Chordata</taxon>
        <taxon>Craniata</taxon>
        <taxon>Vertebrata</taxon>
        <taxon>Euteleostomi</taxon>
        <taxon>Amphibia</taxon>
        <taxon>Batrachia</taxon>
        <taxon>Anura</taxon>
        <taxon>Neobatrachia</taxon>
        <taxon>Ranoidea</taxon>
        <taxon>Ranidae</taxon>
        <taxon>Lithobates</taxon>
    </lineage>
</organism>
<accession>P0DQK2</accession>
<evidence type="ECO:0000269" key="1">
    <source>
    </source>
</evidence>
<evidence type="ECO:0000303" key="2">
    <source>
    </source>
</evidence>
<evidence type="ECO:0000305" key="3"/>
<evidence type="ECO:0000305" key="4">
    <source>
    </source>
</evidence>